<accession>Q76C99</accession>
<accession>Q2PPE7</accession>
<proteinExistence type="evidence at transcript level"/>
<dbReference type="EMBL" id="AB110016">
    <property type="protein sequence ID" value="BAC77666.2"/>
    <property type="molecule type" value="mRNA"/>
</dbReference>
<dbReference type="EMBL" id="AB106867">
    <property type="protein sequence ID" value="BAC77665.2"/>
    <property type="molecule type" value="Genomic_DNA"/>
</dbReference>
<dbReference type="EMBL" id="AB112808">
    <property type="protein sequence ID" value="BAD13708.1"/>
    <property type="molecule type" value="mRNA"/>
</dbReference>
<dbReference type="EMBL" id="AB179840">
    <property type="protein sequence ID" value="BAD20283.1"/>
    <property type="molecule type" value="Genomic_DNA"/>
</dbReference>
<dbReference type="EMBL" id="AB110443">
    <property type="protein sequence ID" value="BAD08214.1"/>
    <property type="molecule type" value="Genomic_DNA"/>
</dbReference>
<dbReference type="EMBL" id="DQ311053">
    <property type="protein sequence ID" value="ABC42330.1"/>
    <property type="molecule type" value="Genomic_DNA"/>
</dbReference>
<dbReference type="SMR" id="Q76C99"/>
<dbReference type="GO" id="GO:0005739">
    <property type="term" value="C:mitochondrion"/>
    <property type="evidence" value="ECO:0007669"/>
    <property type="project" value="UniProtKB-SubCell"/>
</dbReference>
<dbReference type="GO" id="GO:0003729">
    <property type="term" value="F:mRNA binding"/>
    <property type="evidence" value="ECO:0007669"/>
    <property type="project" value="TreeGrafter"/>
</dbReference>
<dbReference type="FunFam" id="1.25.40.10:FF:000558">
    <property type="entry name" value="Pentatricopeptide repeat-containing protein At5g39710"/>
    <property type="match status" value="1"/>
</dbReference>
<dbReference type="Gene3D" id="1.25.40.10">
    <property type="entry name" value="Tetratricopeptide repeat domain"/>
    <property type="match status" value="8"/>
</dbReference>
<dbReference type="InterPro" id="IPR051240">
    <property type="entry name" value="Mito_RNA-Proc/Resp"/>
</dbReference>
<dbReference type="InterPro" id="IPR002885">
    <property type="entry name" value="Pentatricopeptide_rpt"/>
</dbReference>
<dbReference type="InterPro" id="IPR011990">
    <property type="entry name" value="TPR-like_helical_dom_sf"/>
</dbReference>
<dbReference type="NCBIfam" id="TIGR00756">
    <property type="entry name" value="PPR"/>
    <property type="match status" value="16"/>
</dbReference>
<dbReference type="PANTHER" id="PTHR47933:SF45">
    <property type="entry name" value="PENTACOTRIPEPTIDE-REPEAT REGION OF PRORP DOMAIN-CONTAINING PROTEIN"/>
    <property type="match status" value="1"/>
</dbReference>
<dbReference type="PANTHER" id="PTHR47933">
    <property type="entry name" value="PENTATRICOPEPTIDE REPEAT-CONTAINING PROTEIN 1, MITOCHONDRIAL"/>
    <property type="match status" value="1"/>
</dbReference>
<dbReference type="Pfam" id="PF01535">
    <property type="entry name" value="PPR"/>
    <property type="match status" value="1"/>
</dbReference>
<dbReference type="Pfam" id="PF12854">
    <property type="entry name" value="PPR_1"/>
    <property type="match status" value="2"/>
</dbReference>
<dbReference type="Pfam" id="PF13041">
    <property type="entry name" value="PPR_2"/>
    <property type="match status" value="7"/>
</dbReference>
<dbReference type="SUPFAM" id="SSF81901">
    <property type="entry name" value="HCP-like"/>
    <property type="match status" value="1"/>
</dbReference>
<dbReference type="SUPFAM" id="SSF48452">
    <property type="entry name" value="TPR-like"/>
    <property type="match status" value="1"/>
</dbReference>
<dbReference type="PROSITE" id="PS51375">
    <property type="entry name" value="PPR"/>
    <property type="match status" value="19"/>
</dbReference>
<reference key="1">
    <citation type="journal article" date="2003" name="FEBS Lett.">
        <title>A pentatricopeptide repeat-containing gene that promotes the processing of aberrant atp6 RNA of cytoplasmic male-sterile rice.</title>
        <authorList>
            <person name="Kazama T."/>
            <person name="Toriyama K."/>
        </authorList>
    </citation>
    <scope>NUCLEOTIDE SEQUENCE [GENOMIC DNA / MRNA]</scope>
    <scope>FUNCTION</scope>
    <source>
        <strain>cv. BTR</strain>
        <strain>cv. Milyang 23</strain>
        <tissue>Anther</tissue>
    </source>
</reference>
<reference key="2">
    <citation type="journal article" date="2004" name="Theor. Appl. Genet.">
        <title>Positional cloning of the rice Rf-1 gene, a restorer of BT-type cytoplasmic male sterility that encodes a mitochondria-targeting PPR protein.</title>
        <authorList>
            <person name="Akagi H."/>
            <person name="Nakamura A."/>
            <person name="Yokozeki-Misono Y."/>
            <person name="Inagaki A."/>
            <person name="Takahashi H."/>
            <person name="Mori K."/>
            <person name="Fujimura T."/>
        </authorList>
    </citation>
    <scope>NUCLEOTIDE SEQUENCE [GENOMIC DNA / MRNA]</scope>
    <source>
        <strain>cv. MTC-10R</strain>
    </source>
</reference>
<reference key="3">
    <citation type="journal article" date="2004" name="Plant J.">
        <title>Map-based cloning of a fertility restorer gene, Rf-1, in rice (Oryza sativa L.).</title>
        <authorList>
            <person name="Komori T."/>
            <person name="Ohta S."/>
            <person name="Murai N."/>
            <person name="Takakura Y."/>
            <person name="Kuraya Y."/>
            <person name="Suzuki S."/>
            <person name="Hiei Y."/>
            <person name="Imaseki H."/>
            <person name="Nitta N."/>
        </authorList>
    </citation>
    <scope>NUCLEOTIDE SEQUENCE [GENOMIC DNA]</scope>
    <source>
        <strain>cv. IR24</strain>
        <tissue>Leaf</tissue>
    </source>
</reference>
<reference key="4">
    <citation type="journal article" date="2006" name="Plant Cell">
        <title>Cytoplasmic male sterility of rice with boro II cytoplasm is caused by a cytotoxic peptide and is restored by two related PPR motif genes via distinct modes of mRNA silencing.</title>
        <authorList>
            <person name="Wang Z."/>
            <person name="Zou Y."/>
            <person name="Li X."/>
            <person name="Zhang Q."/>
            <person name="Chen L."/>
            <person name="Wu H."/>
            <person name="Su D."/>
            <person name="Chen Y."/>
            <person name="Guo J."/>
            <person name="Luo D."/>
            <person name="Long Y."/>
            <person name="Zhong Y."/>
            <person name="Liu Y.-G."/>
        </authorList>
    </citation>
    <scope>NUCLEOTIDE SEQUENCE [GENOMIC DNA]</scope>
    <scope>FUNCTION</scope>
</reference>
<feature type="transit peptide" description="Mitochondrion" evidence="1">
    <location>
        <begin position="1"/>
        <end position="27"/>
    </location>
</feature>
<feature type="chain" id="PRO_0000022223" description="Protein Rf1, mitochondrial">
    <location>
        <begin position="28"/>
        <end position="791"/>
    </location>
</feature>
<feature type="repeat" description="PPR 1">
    <location>
        <begin position="86"/>
        <end position="120"/>
    </location>
</feature>
<feature type="repeat" description="PPR 2">
    <location>
        <begin position="121"/>
        <end position="156"/>
    </location>
</feature>
<feature type="repeat" description="PPR 3">
    <location>
        <begin position="157"/>
        <end position="194"/>
    </location>
</feature>
<feature type="repeat" description="PPR 4">
    <location>
        <begin position="195"/>
        <end position="229"/>
    </location>
</feature>
<feature type="repeat" description="PPR 5">
    <location>
        <begin position="230"/>
        <end position="264"/>
    </location>
</feature>
<feature type="repeat" description="PPR 6">
    <location>
        <begin position="265"/>
        <end position="299"/>
    </location>
</feature>
<feature type="repeat" description="PPR 7">
    <location>
        <begin position="300"/>
        <end position="334"/>
    </location>
</feature>
<feature type="repeat" description="PPR 8">
    <location>
        <begin position="335"/>
        <end position="369"/>
    </location>
</feature>
<feature type="repeat" description="PPR 9">
    <location>
        <begin position="370"/>
        <end position="404"/>
    </location>
</feature>
<feature type="repeat" description="PPR 10">
    <location>
        <begin position="405"/>
        <end position="439"/>
    </location>
</feature>
<feature type="repeat" description="PPR 11">
    <location>
        <begin position="440"/>
        <end position="474"/>
    </location>
</feature>
<feature type="repeat" description="PPR 12">
    <location>
        <begin position="475"/>
        <end position="509"/>
    </location>
</feature>
<feature type="repeat" description="PPR 13">
    <location>
        <begin position="510"/>
        <end position="544"/>
    </location>
</feature>
<feature type="repeat" description="PPR 14">
    <location>
        <begin position="545"/>
        <end position="579"/>
    </location>
</feature>
<feature type="repeat" description="PPR 15">
    <location>
        <begin position="580"/>
        <end position="614"/>
    </location>
</feature>
<feature type="repeat" description="PPR 16">
    <location>
        <begin position="615"/>
        <end position="649"/>
    </location>
</feature>
<feature type="repeat" description="PPR 17">
    <location>
        <begin position="650"/>
        <end position="684"/>
    </location>
</feature>
<feature type="repeat" description="PPR 18">
    <location>
        <begin position="685"/>
        <end position="719"/>
    </location>
</feature>
<feature type="repeat" description="PPR 19">
    <location>
        <begin position="720"/>
        <end position="754"/>
    </location>
</feature>
<feature type="region of interest" description="Disordered" evidence="2">
    <location>
        <begin position="1"/>
        <end position="31"/>
    </location>
</feature>
<feature type="compositionally biased region" description="Gly residues" evidence="2">
    <location>
        <begin position="20"/>
        <end position="30"/>
    </location>
</feature>
<feature type="sequence conflict" description="In Ref. 4; ABC42330." evidence="5" ref="4">
    <original>K</original>
    <variation>N</variation>
    <location>
        <position position="383"/>
    </location>
</feature>
<protein>
    <recommendedName>
        <fullName>Protein Rf1, mitochondrial</fullName>
    </recommendedName>
    <alternativeName>
        <fullName>Fertility restorer</fullName>
    </alternativeName>
    <alternativeName>
        <fullName>Protein PPR</fullName>
    </alternativeName>
    <alternativeName>
        <fullName>Restorer for CMS</fullName>
    </alternativeName>
</protein>
<name>RF1_ORYSI</name>
<keyword id="KW-0496">Mitochondrion</keyword>
<keyword id="KW-0677">Repeat</keyword>
<keyword id="KW-0809">Transit peptide</keyword>
<evidence type="ECO:0000255" key="1"/>
<evidence type="ECO:0000256" key="2">
    <source>
        <dbReference type="SAM" id="MobiDB-lite"/>
    </source>
</evidence>
<evidence type="ECO:0000269" key="3">
    <source>
    </source>
</evidence>
<evidence type="ECO:0000269" key="4">
    <source>
    </source>
</evidence>
<evidence type="ECO:0000305" key="5"/>
<sequence length="791" mass="87614">MARRAASRAVGALRSDGSIQGRGGRAGGSGAEDARHVFDELLRRGRGASIYGLNRALADVARDSPAAAVSRYNRMARAGADEVTPDLCTYGILIGCCCRAGRLDLGFAALGNVIKKGFRVDAIAFTPLLKGLCADKRTSDAMDIVLRRMTELGCIPNVFSYNILLKGLCDENRSQEALELLHMMADDRGGGSPPDVVSYTTVINGFFKEGDSDKAYSTYHEMLDRGILPDVVTYNSIIAALCKAQAMDKAMEVLNTMVKNGVMPDCMTYNSILHGYCSSGQPKEAIGFLKKMRSDGVEPDVVTYSLLMDYLCKNGRCMEARKIFDSMTKRGLKPEITTYGTLLQGYATKGALVEMHGLLDLMVRNGIHPDHYVFSILICAYAKQGKVDQAMLVFSKMRQQGLNPNAVTYGAVIGILCKSGRVEDAMLYFEQMIDEGLSPGNIVYNSLIHGLCTCNKWERAEELILEMLDRGICLNTIFFNSIIDSHCKEGRVIESEKLFELMVRIGVKPNVITYNTLINGYCLAGKMDEAMKLLSGMVSVGLKPNTVTYSTLINGYCKISRMEDALVLFKEMESSGVSPDIITYNIILQGLFQTRRTAAAKELYVRITESGTQIELSTYNIILHGLCKNKLTDDALQMFQNLCLMDLKLEARTFNIMIDALLKVGRNDEAKDLFVAFSSNGLVPNYWTYRLMAENIIGQGLLEELDQLFLSMEDNGCTVDSGMLNFIVRELLQRGEITRAGTYLSMIDEKHFSLEASTASLFIDLLSGGKYQEYYRFLPEKYKSFIESLSC</sequence>
<organism>
    <name type="scientific">Oryza sativa subsp. indica</name>
    <name type="common">Rice</name>
    <dbReference type="NCBI Taxonomy" id="39946"/>
    <lineage>
        <taxon>Eukaryota</taxon>
        <taxon>Viridiplantae</taxon>
        <taxon>Streptophyta</taxon>
        <taxon>Embryophyta</taxon>
        <taxon>Tracheophyta</taxon>
        <taxon>Spermatophyta</taxon>
        <taxon>Magnoliopsida</taxon>
        <taxon>Liliopsida</taxon>
        <taxon>Poales</taxon>
        <taxon>Poaceae</taxon>
        <taxon>BOP clade</taxon>
        <taxon>Oryzoideae</taxon>
        <taxon>Oryzeae</taxon>
        <taxon>Oryzinae</taxon>
        <taxon>Oryza</taxon>
        <taxon>Oryza sativa</taxon>
    </lineage>
</organism>
<gene>
    <name type="primary">Rf1</name>
    <name type="synonym">PPR791</name>
    <name type="synonym">PPR8-1</name>
    <name type="synonym">Rf-1</name>
    <name type="synonym">Rf-1A</name>
</gene>
<comment type="function">
    <text evidence="3 4">Reduces the expression of the cytoplasmic male sterility (CMS)-associated mitochondrial gene ORF79, encoding a cytotoxic peptide. Can restore male fertility by blocking ORF79 production via endonucleolytic cleavage of dicistronic ATP6/ORF79 mRNA. Promotes the editing of ATP6 mRNAs independently of its cleavage function.</text>
</comment>
<comment type="subcellular location">
    <subcellularLocation>
        <location evidence="5">Mitochondrion</location>
    </subcellularLocation>
</comment>